<proteinExistence type="inferred from homology"/>
<name>ERPA_SACD2</name>
<gene>
    <name evidence="1" type="primary">erpA</name>
    <name type="ordered locus">Sde_0836</name>
</gene>
<dbReference type="EMBL" id="CP000282">
    <property type="protein sequence ID" value="ABD80098.1"/>
    <property type="molecule type" value="Genomic_DNA"/>
</dbReference>
<dbReference type="RefSeq" id="WP_011467319.1">
    <property type="nucleotide sequence ID" value="NC_007912.1"/>
</dbReference>
<dbReference type="SMR" id="Q21MI1"/>
<dbReference type="STRING" id="203122.Sde_0836"/>
<dbReference type="GeneID" id="98612518"/>
<dbReference type="KEGG" id="sde:Sde_0836"/>
<dbReference type="eggNOG" id="COG0316">
    <property type="taxonomic scope" value="Bacteria"/>
</dbReference>
<dbReference type="HOGENOM" id="CLU_069054_5_3_6"/>
<dbReference type="OrthoDB" id="9801228at2"/>
<dbReference type="Proteomes" id="UP000001947">
    <property type="component" value="Chromosome"/>
</dbReference>
<dbReference type="GO" id="GO:0005829">
    <property type="term" value="C:cytosol"/>
    <property type="evidence" value="ECO:0007669"/>
    <property type="project" value="TreeGrafter"/>
</dbReference>
<dbReference type="GO" id="GO:0051537">
    <property type="term" value="F:2 iron, 2 sulfur cluster binding"/>
    <property type="evidence" value="ECO:0007669"/>
    <property type="project" value="TreeGrafter"/>
</dbReference>
<dbReference type="GO" id="GO:0051539">
    <property type="term" value="F:4 iron, 4 sulfur cluster binding"/>
    <property type="evidence" value="ECO:0007669"/>
    <property type="project" value="TreeGrafter"/>
</dbReference>
<dbReference type="GO" id="GO:0005506">
    <property type="term" value="F:iron ion binding"/>
    <property type="evidence" value="ECO:0007669"/>
    <property type="project" value="UniProtKB-UniRule"/>
</dbReference>
<dbReference type="GO" id="GO:0016226">
    <property type="term" value="P:iron-sulfur cluster assembly"/>
    <property type="evidence" value="ECO:0007669"/>
    <property type="project" value="UniProtKB-UniRule"/>
</dbReference>
<dbReference type="FunFam" id="2.60.300.12:FF:000002">
    <property type="entry name" value="Iron-sulfur cluster insertion protein ErpA"/>
    <property type="match status" value="1"/>
</dbReference>
<dbReference type="Gene3D" id="2.60.300.12">
    <property type="entry name" value="HesB-like domain"/>
    <property type="match status" value="1"/>
</dbReference>
<dbReference type="HAMAP" id="MF_01380">
    <property type="entry name" value="Fe_S_insert_ErpA"/>
    <property type="match status" value="1"/>
</dbReference>
<dbReference type="InterPro" id="IPR000361">
    <property type="entry name" value="FeS_biogenesis"/>
</dbReference>
<dbReference type="InterPro" id="IPR016092">
    <property type="entry name" value="FeS_cluster_insertion"/>
</dbReference>
<dbReference type="InterPro" id="IPR017870">
    <property type="entry name" value="FeS_cluster_insertion_CS"/>
</dbReference>
<dbReference type="InterPro" id="IPR023063">
    <property type="entry name" value="FeS_cluster_insertion_RrpA"/>
</dbReference>
<dbReference type="InterPro" id="IPR035903">
    <property type="entry name" value="HesB-like_dom_sf"/>
</dbReference>
<dbReference type="NCBIfam" id="TIGR00049">
    <property type="entry name" value="iron-sulfur cluster assembly accessory protein"/>
    <property type="match status" value="1"/>
</dbReference>
<dbReference type="NCBIfam" id="NF010147">
    <property type="entry name" value="PRK13623.1"/>
    <property type="match status" value="1"/>
</dbReference>
<dbReference type="PANTHER" id="PTHR43011">
    <property type="entry name" value="IRON-SULFUR CLUSTER ASSEMBLY 2 HOMOLOG, MITOCHONDRIAL"/>
    <property type="match status" value="1"/>
</dbReference>
<dbReference type="PANTHER" id="PTHR43011:SF1">
    <property type="entry name" value="IRON-SULFUR CLUSTER ASSEMBLY 2 HOMOLOG, MITOCHONDRIAL"/>
    <property type="match status" value="1"/>
</dbReference>
<dbReference type="Pfam" id="PF01521">
    <property type="entry name" value="Fe-S_biosyn"/>
    <property type="match status" value="1"/>
</dbReference>
<dbReference type="SUPFAM" id="SSF89360">
    <property type="entry name" value="HesB-like domain"/>
    <property type="match status" value="1"/>
</dbReference>
<dbReference type="PROSITE" id="PS01152">
    <property type="entry name" value="HESB"/>
    <property type="match status" value="1"/>
</dbReference>
<reference key="1">
    <citation type="journal article" date="2008" name="PLoS Genet.">
        <title>Complete genome sequence of the complex carbohydrate-degrading marine bacterium, Saccharophagus degradans strain 2-40 T.</title>
        <authorList>
            <person name="Weiner R.M."/>
            <person name="Taylor L.E. II"/>
            <person name="Henrissat B."/>
            <person name="Hauser L."/>
            <person name="Land M."/>
            <person name="Coutinho P.M."/>
            <person name="Rancurel C."/>
            <person name="Saunders E.H."/>
            <person name="Longmire A.G."/>
            <person name="Zhang H."/>
            <person name="Bayer E.A."/>
            <person name="Gilbert H.J."/>
            <person name="Larimer F."/>
            <person name="Zhulin I.B."/>
            <person name="Ekborg N.A."/>
            <person name="Lamed R."/>
            <person name="Richardson P.M."/>
            <person name="Borovok I."/>
            <person name="Hutcheson S."/>
        </authorList>
    </citation>
    <scope>NUCLEOTIDE SEQUENCE [LARGE SCALE GENOMIC DNA]</scope>
    <source>
        <strain>2-40 / ATCC 43961 / DSM 17024</strain>
    </source>
</reference>
<evidence type="ECO:0000255" key="1">
    <source>
        <dbReference type="HAMAP-Rule" id="MF_01380"/>
    </source>
</evidence>
<comment type="function">
    <text evidence="1">Required for insertion of 4Fe-4S clusters for at least IspG.</text>
</comment>
<comment type="cofactor">
    <cofactor evidence="1">
        <name>iron-sulfur cluster</name>
        <dbReference type="ChEBI" id="CHEBI:30408"/>
    </cofactor>
    <text evidence="1">Binds 1 iron-sulfur cluster per subunit.</text>
</comment>
<comment type="subunit">
    <text evidence="1">Homodimer.</text>
</comment>
<comment type="similarity">
    <text evidence="1">Belongs to the HesB/IscA family.</text>
</comment>
<feature type="chain" id="PRO_0000311542" description="Iron-sulfur cluster insertion protein ErpA">
    <location>
        <begin position="1"/>
        <end position="117"/>
    </location>
</feature>
<feature type="binding site" evidence="1">
    <location>
        <position position="45"/>
    </location>
    <ligand>
        <name>iron-sulfur cluster</name>
        <dbReference type="ChEBI" id="CHEBI:30408"/>
    </ligand>
</feature>
<feature type="binding site" evidence="1">
    <location>
        <position position="109"/>
    </location>
    <ligand>
        <name>iron-sulfur cluster</name>
        <dbReference type="ChEBI" id="CHEBI:30408"/>
    </ligand>
</feature>
<feature type="binding site" evidence="1">
    <location>
        <position position="111"/>
    </location>
    <ligand>
        <name>iron-sulfur cluster</name>
        <dbReference type="ChEBI" id="CHEBI:30408"/>
    </ligand>
</feature>
<organism>
    <name type="scientific">Saccharophagus degradans (strain 2-40 / ATCC 43961 / DSM 17024)</name>
    <dbReference type="NCBI Taxonomy" id="203122"/>
    <lineage>
        <taxon>Bacteria</taxon>
        <taxon>Pseudomonadati</taxon>
        <taxon>Pseudomonadota</taxon>
        <taxon>Gammaproteobacteria</taxon>
        <taxon>Cellvibrionales</taxon>
        <taxon>Cellvibrionaceae</taxon>
        <taxon>Saccharophagus</taxon>
    </lineage>
</organism>
<keyword id="KW-0408">Iron</keyword>
<keyword id="KW-0411">Iron-sulfur</keyword>
<keyword id="KW-0479">Metal-binding</keyword>
<keyword id="KW-1185">Reference proteome</keyword>
<accession>Q21MI1</accession>
<sequence>MSAPQTFVPEPVQVTENALAKVKALIEEEGNPDLKLRVFVTGGGCSGFQYGFAFDEACAEDDAKIERDGVTVVVDAMSYPYLVGAQVDYEEGLKGSKFVVANPNASTTCGCGSSFSI</sequence>
<protein>
    <recommendedName>
        <fullName evidence="1">Iron-sulfur cluster insertion protein ErpA</fullName>
    </recommendedName>
</protein>